<feature type="chain" id="PRO_0000096385" description="Mediator of RNA polymerase II transcription subunit 4">
    <location>
        <begin position="1"/>
        <end position="239"/>
    </location>
</feature>
<feature type="region of interest" description="Disordered" evidence="2">
    <location>
        <begin position="168"/>
        <end position="221"/>
    </location>
</feature>
<feature type="compositionally biased region" description="Basic and acidic residues" evidence="2">
    <location>
        <begin position="188"/>
        <end position="198"/>
    </location>
</feature>
<feature type="modified residue" description="Phosphoserine" evidence="5">
    <location>
        <position position="204"/>
    </location>
</feature>
<feature type="modified residue" description="Phosphoserine" evidence="5">
    <location>
        <position position="218"/>
    </location>
</feature>
<feature type="helix" evidence="7">
    <location>
        <begin position="3"/>
        <end position="23"/>
    </location>
</feature>
<feature type="helix" evidence="7">
    <location>
        <begin position="27"/>
        <end position="85"/>
    </location>
</feature>
<feature type="helix" evidence="7">
    <location>
        <begin position="104"/>
        <end position="117"/>
    </location>
</feature>
<feature type="helix" evidence="7">
    <location>
        <begin position="143"/>
        <end position="148"/>
    </location>
</feature>
<feature type="helix" evidence="7">
    <location>
        <begin position="150"/>
        <end position="158"/>
    </location>
</feature>
<feature type="helix" evidence="7">
    <location>
        <begin position="164"/>
        <end position="172"/>
    </location>
</feature>
<comment type="function">
    <text>Component of the Mediator complex, a coactivator involved in the regulated transcription of nearly all RNA polymerase II-dependent genes. Mediator functions as a bridge to convey information from gene-specific regulatory proteins to the basal RNA polymerase II transcription machinery. Mediator is recruited to promoters by direct interactions with regulatory proteins and serves as a scaffold for the assembly of a functional preinitiation complex with RNA polymerase II and the general transcription factors.</text>
</comment>
<comment type="subunit">
    <text evidence="3 4">Component of the Mediator complex.</text>
</comment>
<comment type="subcellular location">
    <subcellularLocation>
        <location evidence="1">Nucleus</location>
    </subcellularLocation>
</comment>
<comment type="similarity">
    <text evidence="6">Belongs to the Mediator complex subunit 4 family.</text>
</comment>
<proteinExistence type="evidence at protein level"/>
<keyword id="KW-0002">3D-structure</keyword>
<keyword id="KW-0010">Activator</keyword>
<keyword id="KW-0539">Nucleus</keyword>
<keyword id="KW-0597">Phosphoprotein</keyword>
<keyword id="KW-1185">Reference proteome</keyword>
<keyword id="KW-0804">Transcription</keyword>
<keyword id="KW-0805">Transcription regulation</keyword>
<gene>
    <name type="primary">med4</name>
    <name type="synonym">pmc4</name>
    <name type="ORF">SPBC1105.06</name>
</gene>
<organism>
    <name type="scientific">Schizosaccharomyces pombe (strain 972 / ATCC 24843)</name>
    <name type="common">Fission yeast</name>
    <dbReference type="NCBI Taxonomy" id="284812"/>
    <lineage>
        <taxon>Eukaryota</taxon>
        <taxon>Fungi</taxon>
        <taxon>Dikarya</taxon>
        <taxon>Ascomycota</taxon>
        <taxon>Taphrinomycotina</taxon>
        <taxon>Schizosaccharomycetes</taxon>
        <taxon>Schizosaccharomycetales</taxon>
        <taxon>Schizosaccharomycetaceae</taxon>
        <taxon>Schizosaccharomyces</taxon>
    </lineage>
</organism>
<protein>
    <recommendedName>
        <fullName>Mediator of RNA polymerase II transcription subunit 4</fullName>
    </recommendedName>
    <alternativeName>
        <fullName>Mediator complex subunit 4</fullName>
    </alternativeName>
    <alternativeName>
        <fullName>RNA polymerase II mediator complex protein pmc4</fullName>
    </alternativeName>
</protein>
<accession>Q9Y821</accession>
<sequence>MEYQRAIDSIEECLNKQLRLSSEKVDQYVLIENWTSLVGHLKTLHSLISNYTNGRELQNEISSLLKQDKELDLQIQDCMREMTSIYDTHLPKTVSGRKRQKVNAETLLDYGRKLSKFSSAPPGYNPETGQDAKAPVHYPWPSEDQMRKTLLFQFSTSMVPNLSATASQLFSEQPPKTNEPTETETEIDANKAVEEKTKMNYPASPTFTTQEENKEVESPANKDVFAGFDLFDPEMEEDF</sequence>
<dbReference type="EMBL" id="CU329671">
    <property type="protein sequence ID" value="CAB50969.1"/>
    <property type="molecule type" value="Genomic_DNA"/>
</dbReference>
<dbReference type="PIR" id="T39283">
    <property type="entry name" value="T39283"/>
</dbReference>
<dbReference type="RefSeq" id="NP_596462.1">
    <property type="nucleotide sequence ID" value="NM_001022381.2"/>
</dbReference>
<dbReference type="PDB" id="5N9J">
    <property type="method" value="X-ray"/>
    <property type="resolution" value="3.40 A"/>
    <property type="chains" value="G=1-239"/>
</dbReference>
<dbReference type="PDBsum" id="5N9J"/>
<dbReference type="SMR" id="Q9Y821"/>
<dbReference type="BioGRID" id="276538">
    <property type="interactions" value="10"/>
</dbReference>
<dbReference type="FunCoup" id="Q9Y821">
    <property type="interactions" value="41"/>
</dbReference>
<dbReference type="IntAct" id="Q9Y821">
    <property type="interactions" value="1"/>
</dbReference>
<dbReference type="STRING" id="284812.Q9Y821"/>
<dbReference type="iPTMnet" id="Q9Y821"/>
<dbReference type="PaxDb" id="4896-SPBC1105.06.1"/>
<dbReference type="EnsemblFungi" id="SPBC1105.06.1">
    <property type="protein sequence ID" value="SPBC1105.06.1:pep"/>
    <property type="gene ID" value="SPBC1105.06"/>
</dbReference>
<dbReference type="GeneID" id="2539994"/>
<dbReference type="KEGG" id="spo:2539994"/>
<dbReference type="PomBase" id="SPBC1105.06"/>
<dbReference type="VEuPathDB" id="FungiDB:SPBC1105.06"/>
<dbReference type="eggNOG" id="ENOG502REXJ">
    <property type="taxonomic scope" value="Eukaryota"/>
</dbReference>
<dbReference type="HOGENOM" id="CLU_1125090_0_0_1"/>
<dbReference type="InParanoid" id="Q9Y821"/>
<dbReference type="OMA" id="HYPWPSE"/>
<dbReference type="PhylomeDB" id="Q9Y821"/>
<dbReference type="PRO" id="PR:Q9Y821"/>
<dbReference type="Proteomes" id="UP000002485">
    <property type="component" value="Chromosome II"/>
</dbReference>
<dbReference type="GO" id="GO:0070847">
    <property type="term" value="C:core mediator complex"/>
    <property type="evidence" value="ECO:0000318"/>
    <property type="project" value="GO_Central"/>
</dbReference>
<dbReference type="GO" id="GO:0016592">
    <property type="term" value="C:mediator complex"/>
    <property type="evidence" value="ECO:0000314"/>
    <property type="project" value="PomBase"/>
</dbReference>
<dbReference type="GO" id="GO:0005634">
    <property type="term" value="C:nucleus"/>
    <property type="evidence" value="ECO:0007005"/>
    <property type="project" value="PomBase"/>
</dbReference>
<dbReference type="GO" id="GO:0003713">
    <property type="term" value="F:transcription coactivator activity"/>
    <property type="evidence" value="ECO:0000305"/>
    <property type="project" value="PomBase"/>
</dbReference>
<dbReference type="GO" id="GO:0003712">
    <property type="term" value="F:transcription coregulator activity"/>
    <property type="evidence" value="ECO:0000318"/>
    <property type="project" value="GO_Central"/>
</dbReference>
<dbReference type="GO" id="GO:0060261">
    <property type="term" value="P:positive regulation of transcription initiation by RNA polymerase II"/>
    <property type="evidence" value="ECO:0000269"/>
    <property type="project" value="PomBase"/>
</dbReference>
<dbReference type="GO" id="GO:0006357">
    <property type="term" value="P:regulation of transcription by RNA polymerase II"/>
    <property type="evidence" value="ECO:0000318"/>
    <property type="project" value="GO_Central"/>
</dbReference>
<dbReference type="InterPro" id="IPR019258">
    <property type="entry name" value="Mediator_Med4"/>
</dbReference>
<dbReference type="PANTHER" id="PTHR13208">
    <property type="entry name" value="MEDIATOR OF RNA POLYMERASE II TRANSCRIPTION SUBUNIT 4"/>
    <property type="match status" value="1"/>
</dbReference>
<dbReference type="PANTHER" id="PTHR13208:SF2">
    <property type="entry name" value="MEDIATOR OF RNA POLYMERASE II TRANSCRIPTION SUBUNIT 4"/>
    <property type="match status" value="1"/>
</dbReference>
<dbReference type="Pfam" id="PF10018">
    <property type="entry name" value="Med4"/>
    <property type="match status" value="1"/>
</dbReference>
<evidence type="ECO:0000250" key="1"/>
<evidence type="ECO:0000256" key="2">
    <source>
        <dbReference type="SAM" id="MobiDB-lite"/>
    </source>
</evidence>
<evidence type="ECO:0000269" key="3">
    <source>
    </source>
</evidence>
<evidence type="ECO:0000269" key="4">
    <source>
    </source>
</evidence>
<evidence type="ECO:0000269" key="5">
    <source>
    </source>
</evidence>
<evidence type="ECO:0000305" key="6"/>
<evidence type="ECO:0007829" key="7">
    <source>
        <dbReference type="PDB" id="5N9J"/>
    </source>
</evidence>
<name>MED4_SCHPO</name>
<reference key="1">
    <citation type="journal article" date="2002" name="Nature">
        <title>The genome sequence of Schizosaccharomyces pombe.</title>
        <authorList>
            <person name="Wood V."/>
            <person name="Gwilliam R."/>
            <person name="Rajandream M.A."/>
            <person name="Lyne M.H."/>
            <person name="Lyne R."/>
            <person name="Stewart A."/>
            <person name="Sgouros J.G."/>
            <person name="Peat N."/>
            <person name="Hayles J."/>
            <person name="Baker S.G."/>
            <person name="Basham D."/>
            <person name="Bowman S."/>
            <person name="Brooks K."/>
            <person name="Brown D."/>
            <person name="Brown S."/>
            <person name="Chillingworth T."/>
            <person name="Churcher C.M."/>
            <person name="Collins M."/>
            <person name="Connor R."/>
            <person name="Cronin A."/>
            <person name="Davis P."/>
            <person name="Feltwell T."/>
            <person name="Fraser A."/>
            <person name="Gentles S."/>
            <person name="Goble A."/>
            <person name="Hamlin N."/>
            <person name="Harris D.E."/>
            <person name="Hidalgo J."/>
            <person name="Hodgson G."/>
            <person name="Holroyd S."/>
            <person name="Hornsby T."/>
            <person name="Howarth S."/>
            <person name="Huckle E.J."/>
            <person name="Hunt S."/>
            <person name="Jagels K."/>
            <person name="James K.D."/>
            <person name="Jones L."/>
            <person name="Jones M."/>
            <person name="Leather S."/>
            <person name="McDonald S."/>
            <person name="McLean J."/>
            <person name="Mooney P."/>
            <person name="Moule S."/>
            <person name="Mungall K.L."/>
            <person name="Murphy L.D."/>
            <person name="Niblett D."/>
            <person name="Odell C."/>
            <person name="Oliver K."/>
            <person name="O'Neil S."/>
            <person name="Pearson D."/>
            <person name="Quail M.A."/>
            <person name="Rabbinowitsch E."/>
            <person name="Rutherford K.M."/>
            <person name="Rutter S."/>
            <person name="Saunders D."/>
            <person name="Seeger K."/>
            <person name="Sharp S."/>
            <person name="Skelton J."/>
            <person name="Simmonds M.N."/>
            <person name="Squares R."/>
            <person name="Squares S."/>
            <person name="Stevens K."/>
            <person name="Taylor K."/>
            <person name="Taylor R.G."/>
            <person name="Tivey A."/>
            <person name="Walsh S.V."/>
            <person name="Warren T."/>
            <person name="Whitehead S."/>
            <person name="Woodward J.R."/>
            <person name="Volckaert G."/>
            <person name="Aert R."/>
            <person name="Robben J."/>
            <person name="Grymonprez B."/>
            <person name="Weltjens I."/>
            <person name="Vanstreels E."/>
            <person name="Rieger M."/>
            <person name="Schaefer M."/>
            <person name="Mueller-Auer S."/>
            <person name="Gabel C."/>
            <person name="Fuchs M."/>
            <person name="Duesterhoeft A."/>
            <person name="Fritzc C."/>
            <person name="Holzer E."/>
            <person name="Moestl D."/>
            <person name="Hilbert H."/>
            <person name="Borzym K."/>
            <person name="Langer I."/>
            <person name="Beck A."/>
            <person name="Lehrach H."/>
            <person name="Reinhardt R."/>
            <person name="Pohl T.M."/>
            <person name="Eger P."/>
            <person name="Zimmermann W."/>
            <person name="Wedler H."/>
            <person name="Wambutt R."/>
            <person name="Purnelle B."/>
            <person name="Goffeau A."/>
            <person name="Cadieu E."/>
            <person name="Dreano S."/>
            <person name="Gloux S."/>
            <person name="Lelaure V."/>
            <person name="Mottier S."/>
            <person name="Galibert F."/>
            <person name="Aves S.J."/>
            <person name="Xiang Z."/>
            <person name="Hunt C."/>
            <person name="Moore K."/>
            <person name="Hurst S.M."/>
            <person name="Lucas M."/>
            <person name="Rochet M."/>
            <person name="Gaillardin C."/>
            <person name="Tallada V.A."/>
            <person name="Garzon A."/>
            <person name="Thode G."/>
            <person name="Daga R.R."/>
            <person name="Cruzado L."/>
            <person name="Jimenez J."/>
            <person name="Sanchez M."/>
            <person name="del Rey F."/>
            <person name="Benito J."/>
            <person name="Dominguez A."/>
            <person name="Revuelta J.L."/>
            <person name="Moreno S."/>
            <person name="Armstrong J."/>
            <person name="Forsburg S.L."/>
            <person name="Cerutti L."/>
            <person name="Lowe T."/>
            <person name="McCombie W.R."/>
            <person name="Paulsen I."/>
            <person name="Potashkin J."/>
            <person name="Shpakovski G.V."/>
            <person name="Ussery D."/>
            <person name="Barrell B.G."/>
            <person name="Nurse P."/>
        </authorList>
    </citation>
    <scope>NUCLEOTIDE SEQUENCE [LARGE SCALE GENOMIC DNA]</scope>
    <source>
        <strain>972 / ATCC 24843</strain>
    </source>
</reference>
<reference key="2">
    <citation type="journal article" date="2000" name="J. Biol. Chem.">
        <title>Purification and characterization of RNA polymerase II holoenzyme from Schizosaccharomyces pombe.</title>
        <authorList>
            <person name="Spaehr H."/>
            <person name="Beve J."/>
            <person name="Larsson T."/>
            <person name="Bergstroem J."/>
            <person name="Karlsson K.-A."/>
            <person name="Gustafsson C.M."/>
        </authorList>
    </citation>
    <scope>IDENTIFICATION BY MASS SPECTROMETRY</scope>
    <scope>IDENTIFICATION IN THE MEDIATOR COMPLEX</scope>
    <source>
        <strain>972 / ATCC 24843</strain>
    </source>
</reference>
<reference key="3">
    <citation type="journal article" date="2001" name="Proc. Natl. Acad. Sci. U.S.A.">
        <title>Analysis of Schizosaccharomyces pombe mediator reveals a set of essential subunits conserved between yeast and metazoan cells.</title>
        <authorList>
            <person name="Spaehr H."/>
            <person name="Samuelsen C.O."/>
            <person name="Baraznenok V."/>
            <person name="Ernest I."/>
            <person name="Huylebroeck D."/>
            <person name="Remacle J.E."/>
            <person name="Samuelsson T."/>
            <person name="Kieselbach T."/>
            <person name="Holmberg S."/>
            <person name="Gustafsson C.M."/>
        </authorList>
    </citation>
    <scope>IDENTIFICATION BY MASS SPECTROMETRY</scope>
    <scope>IDENTIFICATION IN THE MEDIATOR COMPLEX</scope>
</reference>
<reference key="4">
    <citation type="journal article" date="2008" name="J. Proteome Res.">
        <title>Phosphoproteome analysis of fission yeast.</title>
        <authorList>
            <person name="Wilson-Grady J.T."/>
            <person name="Villen J."/>
            <person name="Gygi S.P."/>
        </authorList>
    </citation>
    <scope>PHOSPHORYLATION [LARGE SCALE ANALYSIS] AT SER-204 AND SER-218</scope>
    <scope>IDENTIFICATION BY MASS SPECTROMETRY</scope>
</reference>